<name>MIAA_COXB1</name>
<feature type="chain" id="PRO_0000377130" description="tRNA dimethylallyltransferase">
    <location>
        <begin position="1"/>
        <end position="301"/>
    </location>
</feature>
<feature type="region of interest" description="Interaction with substrate tRNA" evidence="1">
    <location>
        <begin position="27"/>
        <end position="30"/>
    </location>
</feature>
<feature type="region of interest" description="Interaction with substrate tRNA" evidence="1">
    <location>
        <begin position="151"/>
        <end position="155"/>
    </location>
</feature>
<feature type="binding site" evidence="1">
    <location>
        <begin position="2"/>
        <end position="9"/>
    </location>
    <ligand>
        <name>ATP</name>
        <dbReference type="ChEBI" id="CHEBI:30616"/>
    </ligand>
</feature>
<feature type="binding site" evidence="1">
    <location>
        <begin position="4"/>
        <end position="9"/>
    </location>
    <ligand>
        <name>substrate</name>
    </ligand>
</feature>
<feature type="site" description="Interaction with substrate tRNA" evidence="1">
    <location>
        <position position="93"/>
    </location>
</feature>
<feature type="site" description="Interaction with substrate tRNA" evidence="1">
    <location>
        <position position="115"/>
    </location>
</feature>
<dbReference type="EC" id="2.5.1.75" evidence="1"/>
<dbReference type="EMBL" id="CP001020">
    <property type="protein sequence ID" value="ACJ20169.1"/>
    <property type="molecule type" value="Genomic_DNA"/>
</dbReference>
<dbReference type="SMR" id="B6J7C0"/>
<dbReference type="KEGG" id="cbc:CbuK_0951"/>
<dbReference type="HOGENOM" id="CLU_032616_0_0_6"/>
<dbReference type="GO" id="GO:0005524">
    <property type="term" value="F:ATP binding"/>
    <property type="evidence" value="ECO:0007669"/>
    <property type="project" value="UniProtKB-UniRule"/>
</dbReference>
<dbReference type="GO" id="GO:0052381">
    <property type="term" value="F:tRNA dimethylallyltransferase activity"/>
    <property type="evidence" value="ECO:0007669"/>
    <property type="project" value="UniProtKB-UniRule"/>
</dbReference>
<dbReference type="GO" id="GO:0006400">
    <property type="term" value="P:tRNA modification"/>
    <property type="evidence" value="ECO:0007669"/>
    <property type="project" value="TreeGrafter"/>
</dbReference>
<dbReference type="FunFam" id="1.10.20.140:FF:000001">
    <property type="entry name" value="tRNA dimethylallyltransferase"/>
    <property type="match status" value="1"/>
</dbReference>
<dbReference type="Gene3D" id="1.10.20.140">
    <property type="match status" value="1"/>
</dbReference>
<dbReference type="Gene3D" id="3.40.50.300">
    <property type="entry name" value="P-loop containing nucleotide triphosphate hydrolases"/>
    <property type="match status" value="1"/>
</dbReference>
<dbReference type="HAMAP" id="MF_00185">
    <property type="entry name" value="IPP_trans"/>
    <property type="match status" value="1"/>
</dbReference>
<dbReference type="InterPro" id="IPR039657">
    <property type="entry name" value="Dimethylallyltransferase"/>
</dbReference>
<dbReference type="InterPro" id="IPR018022">
    <property type="entry name" value="IPT"/>
</dbReference>
<dbReference type="InterPro" id="IPR027417">
    <property type="entry name" value="P-loop_NTPase"/>
</dbReference>
<dbReference type="NCBIfam" id="TIGR00174">
    <property type="entry name" value="miaA"/>
    <property type="match status" value="1"/>
</dbReference>
<dbReference type="PANTHER" id="PTHR11088">
    <property type="entry name" value="TRNA DIMETHYLALLYLTRANSFERASE"/>
    <property type="match status" value="1"/>
</dbReference>
<dbReference type="PANTHER" id="PTHR11088:SF60">
    <property type="entry name" value="TRNA DIMETHYLALLYLTRANSFERASE"/>
    <property type="match status" value="1"/>
</dbReference>
<dbReference type="Pfam" id="PF01715">
    <property type="entry name" value="IPPT"/>
    <property type="match status" value="1"/>
</dbReference>
<dbReference type="SUPFAM" id="SSF52540">
    <property type="entry name" value="P-loop containing nucleoside triphosphate hydrolases"/>
    <property type="match status" value="2"/>
</dbReference>
<reference key="1">
    <citation type="journal article" date="2009" name="Infect. Immun.">
        <title>Comparative genomics reveal extensive transposon-mediated genomic plasticity and diversity among potential effector proteins within the genus Coxiella.</title>
        <authorList>
            <person name="Beare P.A."/>
            <person name="Unsworth N."/>
            <person name="Andoh M."/>
            <person name="Voth D.E."/>
            <person name="Omsland A."/>
            <person name="Gilk S.D."/>
            <person name="Williams K.P."/>
            <person name="Sobral B.W."/>
            <person name="Kupko J.J. III"/>
            <person name="Porcella S.F."/>
            <person name="Samuel J.E."/>
            <person name="Heinzen R.A."/>
        </authorList>
    </citation>
    <scope>NUCLEOTIDE SEQUENCE [LARGE SCALE GENOMIC DNA]</scope>
    <source>
        <strain>CbuK_Q154</strain>
    </source>
</reference>
<comment type="function">
    <text evidence="1">Catalyzes the transfer of a dimethylallyl group onto the adenine at position 37 in tRNAs that read codons beginning with uridine, leading to the formation of N6-(dimethylallyl)adenosine (i(6)A).</text>
</comment>
<comment type="catalytic activity">
    <reaction evidence="1">
        <text>adenosine(37) in tRNA + dimethylallyl diphosphate = N(6)-dimethylallyladenosine(37) in tRNA + diphosphate</text>
        <dbReference type="Rhea" id="RHEA:26482"/>
        <dbReference type="Rhea" id="RHEA-COMP:10162"/>
        <dbReference type="Rhea" id="RHEA-COMP:10375"/>
        <dbReference type="ChEBI" id="CHEBI:33019"/>
        <dbReference type="ChEBI" id="CHEBI:57623"/>
        <dbReference type="ChEBI" id="CHEBI:74411"/>
        <dbReference type="ChEBI" id="CHEBI:74415"/>
        <dbReference type="EC" id="2.5.1.75"/>
    </reaction>
</comment>
<comment type="cofactor">
    <cofactor evidence="1">
        <name>Mg(2+)</name>
        <dbReference type="ChEBI" id="CHEBI:18420"/>
    </cofactor>
</comment>
<comment type="subunit">
    <text evidence="1">Monomer.</text>
</comment>
<comment type="similarity">
    <text evidence="1">Belongs to the IPP transferase family.</text>
</comment>
<keyword id="KW-0067">ATP-binding</keyword>
<keyword id="KW-0460">Magnesium</keyword>
<keyword id="KW-0547">Nucleotide-binding</keyword>
<keyword id="KW-0808">Transferase</keyword>
<keyword id="KW-0819">tRNA processing</keyword>
<evidence type="ECO:0000255" key="1">
    <source>
        <dbReference type="HAMAP-Rule" id="MF_00185"/>
    </source>
</evidence>
<protein>
    <recommendedName>
        <fullName evidence="1">tRNA dimethylallyltransferase</fullName>
        <ecNumber evidence="1">2.5.1.75</ecNumber>
    </recommendedName>
    <alternativeName>
        <fullName evidence="1">Dimethylallyl diphosphate:tRNA dimethylallyltransferase</fullName>
        <shortName evidence="1">DMAPP:tRNA dimethylallyltransferase</shortName>
        <shortName evidence="1">DMATase</shortName>
    </alternativeName>
    <alternativeName>
        <fullName evidence="1">Isopentenyl-diphosphate:tRNA isopentenyltransferase</fullName>
        <shortName evidence="1">IPP transferase</shortName>
        <shortName evidence="1">IPPT</shortName>
        <shortName evidence="1">IPTase</shortName>
    </alternativeName>
</protein>
<sequence length="301" mass="34795">MGPTASGKTDLAIALARKLPFEIISVDSAMVYRGLDIGTAKPNEEELQLTSHRLINICDPSFPYSAGQFYKDALSEIKTIEIRNRTPLLVGGTMLYFHILEQGFSDLPTADETVRKKIQEEAAQHGWAKIHERLNAIDPKSAARINPNDAQRIQRAFEVYETTGQPLSSYQSLKRFKALPYQFINLILAPENRSWLHQRIEKRFDQMLKNNFLEEVRQLYNRGDLNSDLPAIRTVGYRQVWKYLSGEYDYETMRHKAIAATRQLAKRQLTWLRRWPDAKWFNSEDKDLISQVVDYLKGIGM</sequence>
<gene>
    <name evidence="1" type="primary">miaA</name>
    <name type="ordered locus">CbuK_0951</name>
</gene>
<proteinExistence type="inferred from homology"/>
<accession>B6J7C0</accession>
<organism>
    <name type="scientific">Coxiella burnetii (strain CbuK_Q154)</name>
    <name type="common">Coxiella burnetii (strain Q154)</name>
    <dbReference type="NCBI Taxonomy" id="434924"/>
    <lineage>
        <taxon>Bacteria</taxon>
        <taxon>Pseudomonadati</taxon>
        <taxon>Pseudomonadota</taxon>
        <taxon>Gammaproteobacteria</taxon>
        <taxon>Legionellales</taxon>
        <taxon>Coxiellaceae</taxon>
        <taxon>Coxiella</taxon>
    </lineage>
</organism>